<organism>
    <name type="scientific">Salmonella paratyphi C (strain RKS4594)</name>
    <dbReference type="NCBI Taxonomy" id="476213"/>
    <lineage>
        <taxon>Bacteria</taxon>
        <taxon>Pseudomonadati</taxon>
        <taxon>Pseudomonadota</taxon>
        <taxon>Gammaproteobacteria</taxon>
        <taxon>Enterobacterales</taxon>
        <taxon>Enterobacteriaceae</taxon>
        <taxon>Salmonella</taxon>
    </lineage>
</organism>
<keyword id="KW-0021">Allosteric enzyme</keyword>
<keyword id="KW-0963">Cytoplasm</keyword>
<keyword id="KW-0378">Hydrolase</keyword>
<keyword id="KW-0479">Metal-binding</keyword>
<keyword id="KW-0645">Protease</keyword>
<keyword id="KW-0915">Sodium</keyword>
<keyword id="KW-0346">Stress response</keyword>
<keyword id="KW-0888">Threonine protease</keyword>
<comment type="function">
    <text evidence="1">Protease subunit of a proteasome-like degradation complex believed to be a general protein degrading machinery.</text>
</comment>
<comment type="catalytic activity">
    <reaction evidence="1">
        <text>ATP-dependent cleavage of peptide bonds with broad specificity.</text>
        <dbReference type="EC" id="3.4.25.2"/>
    </reaction>
</comment>
<comment type="activity regulation">
    <text evidence="1">Allosterically activated by HslU binding.</text>
</comment>
<comment type="subunit">
    <text evidence="1">A double ring-shaped homohexamer of HslV is capped on each side by a ring-shaped HslU homohexamer. The assembly of the HslU/HslV complex is dependent on binding of ATP.</text>
</comment>
<comment type="subcellular location">
    <subcellularLocation>
        <location evidence="1">Cytoplasm</location>
    </subcellularLocation>
</comment>
<comment type="induction">
    <text evidence="1">By heat shock.</text>
</comment>
<comment type="similarity">
    <text evidence="1">Belongs to the peptidase T1B family. HslV subfamily.</text>
</comment>
<evidence type="ECO:0000255" key="1">
    <source>
        <dbReference type="HAMAP-Rule" id="MF_00248"/>
    </source>
</evidence>
<accession>C0Q442</accession>
<dbReference type="EC" id="3.4.25.2" evidence="1"/>
<dbReference type="EMBL" id="CP000857">
    <property type="protein sequence ID" value="ACN48261.1"/>
    <property type="molecule type" value="Genomic_DNA"/>
</dbReference>
<dbReference type="RefSeq" id="WP_000208240.1">
    <property type="nucleotide sequence ID" value="NC_012125.1"/>
</dbReference>
<dbReference type="SMR" id="C0Q442"/>
<dbReference type="MEROPS" id="T01.006"/>
<dbReference type="KEGG" id="sei:SPC_4198"/>
<dbReference type="HOGENOM" id="CLU_093872_1_0_6"/>
<dbReference type="Proteomes" id="UP000001599">
    <property type="component" value="Chromosome"/>
</dbReference>
<dbReference type="GO" id="GO:0009376">
    <property type="term" value="C:HslUV protease complex"/>
    <property type="evidence" value="ECO:0007669"/>
    <property type="project" value="UniProtKB-UniRule"/>
</dbReference>
<dbReference type="GO" id="GO:0005839">
    <property type="term" value="C:proteasome core complex"/>
    <property type="evidence" value="ECO:0007669"/>
    <property type="project" value="InterPro"/>
</dbReference>
<dbReference type="GO" id="GO:0046872">
    <property type="term" value="F:metal ion binding"/>
    <property type="evidence" value="ECO:0007669"/>
    <property type="project" value="UniProtKB-KW"/>
</dbReference>
<dbReference type="GO" id="GO:0004298">
    <property type="term" value="F:threonine-type endopeptidase activity"/>
    <property type="evidence" value="ECO:0007669"/>
    <property type="project" value="UniProtKB-KW"/>
</dbReference>
<dbReference type="GO" id="GO:0051603">
    <property type="term" value="P:proteolysis involved in protein catabolic process"/>
    <property type="evidence" value="ECO:0007669"/>
    <property type="project" value="InterPro"/>
</dbReference>
<dbReference type="CDD" id="cd01913">
    <property type="entry name" value="protease_HslV"/>
    <property type="match status" value="1"/>
</dbReference>
<dbReference type="FunFam" id="3.60.20.10:FF:000002">
    <property type="entry name" value="ATP-dependent protease subunit HslV"/>
    <property type="match status" value="1"/>
</dbReference>
<dbReference type="Gene3D" id="3.60.20.10">
    <property type="entry name" value="Glutamine Phosphoribosylpyrophosphate, subunit 1, domain 1"/>
    <property type="match status" value="1"/>
</dbReference>
<dbReference type="HAMAP" id="MF_00248">
    <property type="entry name" value="HslV"/>
    <property type="match status" value="1"/>
</dbReference>
<dbReference type="InterPro" id="IPR022281">
    <property type="entry name" value="ATP-dep_Prtase_HsIV_su"/>
</dbReference>
<dbReference type="InterPro" id="IPR029055">
    <property type="entry name" value="Ntn_hydrolases_N"/>
</dbReference>
<dbReference type="InterPro" id="IPR001353">
    <property type="entry name" value="Proteasome_sua/b"/>
</dbReference>
<dbReference type="InterPro" id="IPR023333">
    <property type="entry name" value="Proteasome_suB-type"/>
</dbReference>
<dbReference type="NCBIfam" id="TIGR03692">
    <property type="entry name" value="ATP_dep_HslV"/>
    <property type="match status" value="1"/>
</dbReference>
<dbReference type="NCBIfam" id="NF003964">
    <property type="entry name" value="PRK05456.1"/>
    <property type="match status" value="1"/>
</dbReference>
<dbReference type="PANTHER" id="PTHR32194:SF0">
    <property type="entry name" value="ATP-DEPENDENT PROTEASE SUBUNIT HSLV"/>
    <property type="match status" value="1"/>
</dbReference>
<dbReference type="PANTHER" id="PTHR32194">
    <property type="entry name" value="METALLOPROTEASE TLDD"/>
    <property type="match status" value="1"/>
</dbReference>
<dbReference type="Pfam" id="PF00227">
    <property type="entry name" value="Proteasome"/>
    <property type="match status" value="1"/>
</dbReference>
<dbReference type="PIRSF" id="PIRSF039093">
    <property type="entry name" value="HslV"/>
    <property type="match status" value="1"/>
</dbReference>
<dbReference type="SUPFAM" id="SSF56235">
    <property type="entry name" value="N-terminal nucleophile aminohydrolases (Ntn hydrolases)"/>
    <property type="match status" value="1"/>
</dbReference>
<dbReference type="PROSITE" id="PS51476">
    <property type="entry name" value="PROTEASOME_BETA_2"/>
    <property type="match status" value="1"/>
</dbReference>
<sequence length="176" mass="18985">MTTIVSVRRNGHVVIAGDGQATLGNTVMKGNVKKVRRLYNDKVIAGFAGGTADAFTLFELFERKLEMHQGHLVKAAVELAKDWRTDRMLRKLEALLAVADETASLIITGNGDVVQPENDLIAIGSGGPYAQAAARALLENTELGAREIAEKALDIAGDICIYTNHFHTIEELTAKA</sequence>
<reference key="1">
    <citation type="journal article" date="2009" name="PLoS ONE">
        <title>Salmonella paratyphi C: genetic divergence from Salmonella choleraesuis and pathogenic convergence with Salmonella typhi.</title>
        <authorList>
            <person name="Liu W.-Q."/>
            <person name="Feng Y."/>
            <person name="Wang Y."/>
            <person name="Zou Q.-H."/>
            <person name="Chen F."/>
            <person name="Guo J.-T."/>
            <person name="Peng Y.-H."/>
            <person name="Jin Y."/>
            <person name="Li Y.-G."/>
            <person name="Hu S.-N."/>
            <person name="Johnston R.N."/>
            <person name="Liu G.-R."/>
            <person name="Liu S.-L."/>
        </authorList>
    </citation>
    <scope>NUCLEOTIDE SEQUENCE [LARGE SCALE GENOMIC DNA]</scope>
    <source>
        <strain>RKS4594</strain>
    </source>
</reference>
<proteinExistence type="inferred from homology"/>
<name>HSLV_SALPC</name>
<feature type="chain" id="PRO_1000125416" description="ATP-dependent protease subunit HslV">
    <location>
        <begin position="1"/>
        <end position="176"/>
    </location>
</feature>
<feature type="active site" evidence="1">
    <location>
        <position position="2"/>
    </location>
</feature>
<feature type="binding site" evidence="1">
    <location>
        <position position="157"/>
    </location>
    <ligand>
        <name>Na(+)</name>
        <dbReference type="ChEBI" id="CHEBI:29101"/>
    </ligand>
</feature>
<feature type="binding site" evidence="1">
    <location>
        <position position="160"/>
    </location>
    <ligand>
        <name>Na(+)</name>
        <dbReference type="ChEBI" id="CHEBI:29101"/>
    </ligand>
</feature>
<feature type="binding site" evidence="1">
    <location>
        <position position="163"/>
    </location>
    <ligand>
        <name>Na(+)</name>
        <dbReference type="ChEBI" id="CHEBI:29101"/>
    </ligand>
</feature>
<protein>
    <recommendedName>
        <fullName evidence="1">ATP-dependent protease subunit HslV</fullName>
        <ecNumber evidence="1">3.4.25.2</ecNumber>
    </recommendedName>
    <alternativeName>
        <fullName evidence="1">Heat shock protein HslV</fullName>
    </alternativeName>
</protein>
<gene>
    <name evidence="1" type="primary">hslV</name>
    <name type="ordered locus">SPC_4198</name>
</gene>